<gene>
    <name evidence="1" type="primary">mdtB</name>
    <name type="ordered locus">SbBS512_E1158</name>
</gene>
<accession>B2TYA8</accession>
<feature type="chain" id="PRO_1000145665" description="Multidrug resistance protein MdtB">
    <location>
        <begin position="1"/>
        <end position="1040"/>
    </location>
</feature>
<feature type="transmembrane region" description="Helical" evidence="1">
    <location>
        <begin position="16"/>
        <end position="36"/>
    </location>
</feature>
<feature type="transmembrane region" description="Helical" evidence="1">
    <location>
        <begin position="347"/>
        <end position="367"/>
    </location>
</feature>
<feature type="transmembrane region" description="Helical" evidence="1">
    <location>
        <begin position="369"/>
        <end position="389"/>
    </location>
</feature>
<feature type="transmembrane region" description="Helical" evidence="1">
    <location>
        <begin position="396"/>
        <end position="416"/>
    </location>
</feature>
<feature type="transmembrane region" description="Helical" evidence="1">
    <location>
        <begin position="440"/>
        <end position="460"/>
    </location>
</feature>
<feature type="transmembrane region" description="Helical" evidence="1">
    <location>
        <begin position="472"/>
        <end position="492"/>
    </location>
</feature>
<feature type="transmembrane region" description="Helical" evidence="1">
    <location>
        <begin position="537"/>
        <end position="557"/>
    </location>
</feature>
<feature type="transmembrane region" description="Helical" evidence="1">
    <location>
        <begin position="863"/>
        <end position="883"/>
    </location>
</feature>
<feature type="transmembrane region" description="Helical" evidence="1">
    <location>
        <begin position="888"/>
        <end position="908"/>
    </location>
</feature>
<feature type="transmembrane region" description="Helical" evidence="1">
    <location>
        <begin position="911"/>
        <end position="931"/>
    </location>
</feature>
<feature type="transmembrane region" description="Helical" evidence="1">
    <location>
        <begin position="968"/>
        <end position="988"/>
    </location>
</feature>
<feature type="transmembrane region" description="Helical" evidence="1">
    <location>
        <begin position="998"/>
        <end position="1018"/>
    </location>
</feature>
<evidence type="ECO:0000255" key="1">
    <source>
        <dbReference type="HAMAP-Rule" id="MF_01423"/>
    </source>
</evidence>
<dbReference type="EMBL" id="CP001063">
    <property type="protein sequence ID" value="ACD10292.1"/>
    <property type="molecule type" value="Genomic_DNA"/>
</dbReference>
<dbReference type="RefSeq" id="WP_001197848.1">
    <property type="nucleotide sequence ID" value="NC_010658.1"/>
</dbReference>
<dbReference type="SMR" id="B2TYA8"/>
<dbReference type="STRING" id="344609.SbBS512_E1158"/>
<dbReference type="KEGG" id="sbc:SbBS512_E1158"/>
<dbReference type="HOGENOM" id="CLU_002755_1_2_6"/>
<dbReference type="Proteomes" id="UP000001030">
    <property type="component" value="Chromosome"/>
</dbReference>
<dbReference type="GO" id="GO:0005886">
    <property type="term" value="C:plasma membrane"/>
    <property type="evidence" value="ECO:0007669"/>
    <property type="project" value="UniProtKB-SubCell"/>
</dbReference>
<dbReference type="GO" id="GO:0042910">
    <property type="term" value="F:xenobiotic transmembrane transporter activity"/>
    <property type="evidence" value="ECO:0007669"/>
    <property type="project" value="TreeGrafter"/>
</dbReference>
<dbReference type="FunFam" id="1.20.1640.10:FF:000001">
    <property type="entry name" value="Efflux pump membrane transporter"/>
    <property type="match status" value="1"/>
</dbReference>
<dbReference type="FunFam" id="3.30.70.1430:FF:000001">
    <property type="entry name" value="Efflux pump membrane transporter"/>
    <property type="match status" value="1"/>
</dbReference>
<dbReference type="FunFam" id="3.30.2090.10:FF:000003">
    <property type="entry name" value="Multidrug resistance protein MdtB"/>
    <property type="match status" value="1"/>
</dbReference>
<dbReference type="Gene3D" id="3.30.70.1430">
    <property type="entry name" value="Multidrug efflux transporter AcrB pore domain"/>
    <property type="match status" value="2"/>
</dbReference>
<dbReference type="Gene3D" id="3.30.70.1440">
    <property type="entry name" value="Multidrug efflux transporter AcrB pore domain"/>
    <property type="match status" value="1"/>
</dbReference>
<dbReference type="Gene3D" id="3.30.70.1320">
    <property type="entry name" value="Multidrug efflux transporter AcrB pore domain like"/>
    <property type="match status" value="1"/>
</dbReference>
<dbReference type="Gene3D" id="3.30.2090.10">
    <property type="entry name" value="Multidrug efflux transporter AcrB TolC docking domain, DN and DC subdomains"/>
    <property type="match status" value="2"/>
</dbReference>
<dbReference type="Gene3D" id="1.20.1640.10">
    <property type="entry name" value="Multidrug efflux transporter AcrB transmembrane domain"/>
    <property type="match status" value="2"/>
</dbReference>
<dbReference type="HAMAP" id="MF_01423">
    <property type="entry name" value="MdtB"/>
    <property type="match status" value="1"/>
</dbReference>
<dbReference type="InterPro" id="IPR027463">
    <property type="entry name" value="AcrB_DN_DC_subdom"/>
</dbReference>
<dbReference type="InterPro" id="IPR001036">
    <property type="entry name" value="Acrflvin-R"/>
</dbReference>
<dbReference type="InterPro" id="IPR022831">
    <property type="entry name" value="Multidrug-R_MdtB"/>
</dbReference>
<dbReference type="NCBIfam" id="NF007798">
    <property type="entry name" value="PRK10503.1"/>
    <property type="match status" value="1"/>
</dbReference>
<dbReference type="NCBIfam" id="NF033617">
    <property type="entry name" value="RND_permease_2"/>
    <property type="match status" value="1"/>
</dbReference>
<dbReference type="PANTHER" id="PTHR32063">
    <property type="match status" value="1"/>
</dbReference>
<dbReference type="PANTHER" id="PTHR32063:SF21">
    <property type="entry name" value="MULTIDRUG RESISTANCE PROTEIN MDTB"/>
    <property type="match status" value="1"/>
</dbReference>
<dbReference type="Pfam" id="PF00873">
    <property type="entry name" value="ACR_tran"/>
    <property type="match status" value="1"/>
</dbReference>
<dbReference type="PRINTS" id="PR00702">
    <property type="entry name" value="ACRIFLAVINRP"/>
</dbReference>
<dbReference type="SUPFAM" id="SSF82693">
    <property type="entry name" value="Multidrug efflux transporter AcrB pore domain, PN1, PN2, PC1 and PC2 subdomains"/>
    <property type="match status" value="3"/>
</dbReference>
<dbReference type="SUPFAM" id="SSF82714">
    <property type="entry name" value="Multidrug efflux transporter AcrB TolC docking domain, DN and DC subdomains"/>
    <property type="match status" value="2"/>
</dbReference>
<dbReference type="SUPFAM" id="SSF82866">
    <property type="entry name" value="Multidrug efflux transporter AcrB transmembrane domain"/>
    <property type="match status" value="2"/>
</dbReference>
<organism>
    <name type="scientific">Shigella boydii serotype 18 (strain CDC 3083-94 / BS512)</name>
    <dbReference type="NCBI Taxonomy" id="344609"/>
    <lineage>
        <taxon>Bacteria</taxon>
        <taxon>Pseudomonadati</taxon>
        <taxon>Pseudomonadota</taxon>
        <taxon>Gammaproteobacteria</taxon>
        <taxon>Enterobacterales</taxon>
        <taxon>Enterobacteriaceae</taxon>
        <taxon>Shigella</taxon>
    </lineage>
</organism>
<keyword id="KW-0997">Cell inner membrane</keyword>
<keyword id="KW-1003">Cell membrane</keyword>
<keyword id="KW-0472">Membrane</keyword>
<keyword id="KW-1185">Reference proteome</keyword>
<keyword id="KW-0812">Transmembrane</keyword>
<keyword id="KW-1133">Transmembrane helix</keyword>
<keyword id="KW-0813">Transport</keyword>
<reference key="1">
    <citation type="submission" date="2008-05" db="EMBL/GenBank/DDBJ databases">
        <title>Complete sequence of Shigella boydii serotype 18 strain BS512.</title>
        <authorList>
            <person name="Rasko D.A."/>
            <person name="Rosovitz M."/>
            <person name="Maurelli A.T."/>
            <person name="Myers G."/>
            <person name="Seshadri R."/>
            <person name="Cer R."/>
            <person name="Jiang L."/>
            <person name="Ravel J."/>
            <person name="Sebastian Y."/>
        </authorList>
    </citation>
    <scope>NUCLEOTIDE SEQUENCE [LARGE SCALE GENOMIC DNA]</scope>
    <source>
        <strain>CDC 3083-94 / BS512</strain>
    </source>
</reference>
<proteinExistence type="inferred from homology"/>
<sequence length="1040" mass="111929">MQVLPPSSTGGPSRLFIMRPVATTLLMVAILLAGIIGYRALPVSALPEVDYPTIQVVTLYPGASPDVMTSAVTAPLERQFGQMSGLKQMSSQSSGGASVITLQFQLTLPLDVAEQEVQAAINAATNLLPSDLPNPPVYSKVNPADPPIMTLAVTSTAMPMTQVEDMVETRVAQKISQISGVGLVTLSGGQRPAVRVKLNAQAIAALGLTSETVRTAITGANVNSAKGSLDGPSRAVTLSANDQMQSAEEYRQLIIAYQNGAPIRLGDVATVEQGAENSWLGAWANKEQAIVMNVQRQPGANIISTADSIRQMLPQLTESLPKSVEVTVLSDRTTNIRASVDDTQCELMMAIALVVMIIYLFLRNIPATIIPGVAVPLSLIGTFAVMVFLDFSINNLTLMALTIATGFVVDDAIVVIENISRYIEKGEKPLAAALKGAGEIGFTIISLTFSLIAVLIPLLFMGDIVGRLFREFAITLAVAILISAVVSLTLTPMMCARMLSQESLRKQNRFSRASEKMFDRIIAAYGRGLAKVLNHPWLTLSVALSTLLLSVLLWVFIPKGFFPVQDNGIIQGTLQAPQSSSFANMAQRQRQVADVILQDPAVQSLTSFVGVDGTNPSLNSARLQINLKPLDERDDRVQKVIARLQTAVDKVPGVDLFLQPTQDLTIDTQVSRTQYQFTLQATSLDALSTWVPQLMEKLQQLPQLSDVSSDWQDKGLVAYVNVDRDSASRLGISMADVDNALYNAFGQRLISTIYTQANQYRVVLEHNTENTPGLAALGTIRLTSSDGGVVPLSSIAKIEQRFAPLSINHLDQFPVTTISFNVPDNYSLGDAVQAIMDTEKTLNLPVDITTQFQGCTLAFQSALGSTVWLIVAAVVAMYIVLGILYESFIHPITILSTLPTAGVGALLALMIAGSELDVIAIIGIILLIGIVKKNAIMMIDFALAAEREQGMSPRDAIYQACLLRFRPILMTTLAALLGALPLMLSTGVGAELRRPLGIGMVGGLVVSQVLTLFTTPVIYLLFDRLALWTKSRFACHEEEA</sequence>
<name>MDTB_SHIB3</name>
<protein>
    <recommendedName>
        <fullName evidence="1">Multidrug resistance protein MdtB</fullName>
    </recommendedName>
    <alternativeName>
        <fullName evidence="1">Multidrug transporter MdtB</fullName>
    </alternativeName>
</protein>
<comment type="subunit">
    <text evidence="1">Part of a tripartite efflux system composed of MdtA, MdtB and MdtC. MdtB forms a heteromultimer with MdtC.</text>
</comment>
<comment type="subcellular location">
    <subcellularLocation>
        <location evidence="1">Cell inner membrane</location>
        <topology evidence="1">Multi-pass membrane protein</topology>
    </subcellularLocation>
</comment>
<comment type="similarity">
    <text evidence="1">Belongs to the resistance-nodulation-cell division (RND) (TC 2.A.6) family. MdtB subfamily.</text>
</comment>